<proteinExistence type="inferred from homology"/>
<protein>
    <recommendedName>
        <fullName evidence="1">Multifunctional CCA protein</fullName>
    </recommendedName>
    <domain>
        <recommendedName>
            <fullName evidence="1">CCA-adding enzyme</fullName>
            <ecNumber evidence="1">2.7.7.72</ecNumber>
        </recommendedName>
        <alternativeName>
            <fullName evidence="1">CCA tRNA nucleotidyltransferase</fullName>
        </alternativeName>
        <alternativeName>
            <fullName evidence="1">tRNA CCA-pyrophosphorylase</fullName>
        </alternativeName>
        <alternativeName>
            <fullName evidence="1">tRNA adenylyl-/cytidylyl-transferase</fullName>
        </alternativeName>
        <alternativeName>
            <fullName evidence="1">tRNA nucleotidyltransferase</fullName>
        </alternativeName>
        <alternativeName>
            <fullName evidence="1">tRNA-NT</fullName>
        </alternativeName>
    </domain>
    <domain>
        <recommendedName>
            <fullName evidence="1">2'-nucleotidase</fullName>
            <ecNumber evidence="1">3.1.3.-</ecNumber>
        </recommendedName>
    </domain>
    <domain>
        <recommendedName>
            <fullName evidence="1">2',3'-cyclic phosphodiesterase</fullName>
            <ecNumber evidence="1">3.1.4.-</ecNumber>
        </recommendedName>
    </domain>
    <domain>
        <recommendedName>
            <fullName evidence="1">Phosphatase</fullName>
            <ecNumber evidence="1">3.1.3.-</ecNumber>
        </recommendedName>
    </domain>
</protein>
<name>CCA_PARC0</name>
<feature type="chain" id="PRO_1000054241" description="Multifunctional CCA protein">
    <location>
        <begin position="1"/>
        <end position="419"/>
    </location>
</feature>
<feature type="domain" description="HD" evidence="1">
    <location>
        <begin position="230"/>
        <end position="331"/>
    </location>
</feature>
<feature type="binding site" evidence="1">
    <location>
        <position position="8"/>
    </location>
    <ligand>
        <name>ATP</name>
        <dbReference type="ChEBI" id="CHEBI:30616"/>
    </ligand>
</feature>
<feature type="binding site" evidence="1">
    <location>
        <position position="8"/>
    </location>
    <ligand>
        <name>CTP</name>
        <dbReference type="ChEBI" id="CHEBI:37563"/>
    </ligand>
</feature>
<feature type="binding site" evidence="1">
    <location>
        <position position="11"/>
    </location>
    <ligand>
        <name>ATP</name>
        <dbReference type="ChEBI" id="CHEBI:30616"/>
    </ligand>
</feature>
<feature type="binding site" evidence="1">
    <location>
        <position position="11"/>
    </location>
    <ligand>
        <name>CTP</name>
        <dbReference type="ChEBI" id="CHEBI:37563"/>
    </ligand>
</feature>
<feature type="binding site" evidence="1">
    <location>
        <position position="21"/>
    </location>
    <ligand>
        <name>Mg(2+)</name>
        <dbReference type="ChEBI" id="CHEBI:18420"/>
    </ligand>
</feature>
<feature type="binding site" evidence="1">
    <location>
        <position position="23"/>
    </location>
    <ligand>
        <name>Mg(2+)</name>
        <dbReference type="ChEBI" id="CHEBI:18420"/>
    </ligand>
</feature>
<feature type="binding site" evidence="1">
    <location>
        <position position="91"/>
    </location>
    <ligand>
        <name>ATP</name>
        <dbReference type="ChEBI" id="CHEBI:30616"/>
    </ligand>
</feature>
<feature type="binding site" evidence="1">
    <location>
        <position position="91"/>
    </location>
    <ligand>
        <name>CTP</name>
        <dbReference type="ChEBI" id="CHEBI:37563"/>
    </ligand>
</feature>
<feature type="binding site" evidence="1">
    <location>
        <position position="141"/>
    </location>
    <ligand>
        <name>ATP</name>
        <dbReference type="ChEBI" id="CHEBI:30616"/>
    </ligand>
</feature>
<feature type="binding site" evidence="1">
    <location>
        <position position="141"/>
    </location>
    <ligand>
        <name>CTP</name>
        <dbReference type="ChEBI" id="CHEBI:37563"/>
    </ligand>
</feature>
<feature type="binding site" evidence="1">
    <location>
        <position position="144"/>
    </location>
    <ligand>
        <name>ATP</name>
        <dbReference type="ChEBI" id="CHEBI:30616"/>
    </ligand>
</feature>
<feature type="binding site" evidence="1">
    <location>
        <position position="144"/>
    </location>
    <ligand>
        <name>CTP</name>
        <dbReference type="ChEBI" id="CHEBI:37563"/>
    </ligand>
</feature>
<keyword id="KW-0067">ATP-binding</keyword>
<keyword id="KW-0378">Hydrolase</keyword>
<keyword id="KW-0460">Magnesium</keyword>
<keyword id="KW-0479">Metal-binding</keyword>
<keyword id="KW-0511">Multifunctional enzyme</keyword>
<keyword id="KW-0533">Nickel</keyword>
<keyword id="KW-0547">Nucleotide-binding</keyword>
<keyword id="KW-0548">Nucleotidyltransferase</keyword>
<keyword id="KW-0692">RNA repair</keyword>
<keyword id="KW-0694">RNA-binding</keyword>
<keyword id="KW-0808">Transferase</keyword>
<keyword id="KW-0819">tRNA processing</keyword>
<evidence type="ECO:0000255" key="1">
    <source>
        <dbReference type="HAMAP-Rule" id="MF_01261"/>
    </source>
</evidence>
<sequence>MQIYMVGGAVRDRLLGRPVNDRDWVVVGATPDDLAARGFLPVGRDFPVFLHPETREEYALARTERKSGRGYRGFVVDTAPDVTLEQDLSRRDLTINAMAVRGEDPAAWELVDPYGGARDLQAKLLRHVTDAFREDPVRILRVARFAARFTDFSVAPETMALMREMVDAGEAADLVPERVWQEIARGLMEAAPSRMFEVLRGCGALAVLLPELDRLWGVPQRAEYHPEVDTGVHVMMVLDMAARLHAPLAVRFASLVHDLGKGTTPADVLPRHIGHEQRSATLLADVCERLRVPVECRETADVVAREHGNIHRSAELGAAALVRLLERCDALRKPARFADVLLACECDARGRLGFEETPYPQRQRLLGALQAARSVDTAAVAARAQARGAAGPQVGEWIRRARGDAVQEWMAAQPPAAGT</sequence>
<gene>
    <name evidence="1" type="primary">cca</name>
    <name type="ordered locus">Aave_4208</name>
</gene>
<organism>
    <name type="scientific">Paracidovorax citrulli (strain AAC00-1)</name>
    <name type="common">Acidovorax citrulli</name>
    <dbReference type="NCBI Taxonomy" id="397945"/>
    <lineage>
        <taxon>Bacteria</taxon>
        <taxon>Pseudomonadati</taxon>
        <taxon>Pseudomonadota</taxon>
        <taxon>Betaproteobacteria</taxon>
        <taxon>Burkholderiales</taxon>
        <taxon>Comamonadaceae</taxon>
        <taxon>Paracidovorax</taxon>
    </lineage>
</organism>
<comment type="function">
    <text evidence="1">Catalyzes the addition and repair of the essential 3'-terminal CCA sequence in tRNAs without using a nucleic acid template. Adds these three nucleotides in the order of C, C, and A to the tRNA nucleotide-73, using CTP and ATP as substrates and producing inorganic pyrophosphate. tRNA 3'-terminal CCA addition is required both for tRNA processing and repair. Also involved in tRNA surveillance by mediating tandem CCA addition to generate a CCACCA at the 3' terminus of unstable tRNAs. While stable tRNAs receive only 3'-terminal CCA, unstable tRNAs are marked with CCACCA and rapidly degraded.</text>
</comment>
<comment type="catalytic activity">
    <reaction evidence="1">
        <text>a tRNA precursor + 2 CTP + ATP = a tRNA with a 3' CCA end + 3 diphosphate</text>
        <dbReference type="Rhea" id="RHEA:14433"/>
        <dbReference type="Rhea" id="RHEA-COMP:10465"/>
        <dbReference type="Rhea" id="RHEA-COMP:10468"/>
        <dbReference type="ChEBI" id="CHEBI:30616"/>
        <dbReference type="ChEBI" id="CHEBI:33019"/>
        <dbReference type="ChEBI" id="CHEBI:37563"/>
        <dbReference type="ChEBI" id="CHEBI:74896"/>
        <dbReference type="ChEBI" id="CHEBI:83071"/>
        <dbReference type="EC" id="2.7.7.72"/>
    </reaction>
</comment>
<comment type="catalytic activity">
    <reaction evidence="1">
        <text>a tRNA with a 3' CCA end + 2 CTP + ATP = a tRNA with a 3' CCACCA end + 3 diphosphate</text>
        <dbReference type="Rhea" id="RHEA:76235"/>
        <dbReference type="Rhea" id="RHEA-COMP:10468"/>
        <dbReference type="Rhea" id="RHEA-COMP:18655"/>
        <dbReference type="ChEBI" id="CHEBI:30616"/>
        <dbReference type="ChEBI" id="CHEBI:33019"/>
        <dbReference type="ChEBI" id="CHEBI:37563"/>
        <dbReference type="ChEBI" id="CHEBI:83071"/>
        <dbReference type="ChEBI" id="CHEBI:195187"/>
    </reaction>
    <physiologicalReaction direction="left-to-right" evidence="1">
        <dbReference type="Rhea" id="RHEA:76236"/>
    </physiologicalReaction>
</comment>
<comment type="cofactor">
    <cofactor evidence="1">
        <name>Mg(2+)</name>
        <dbReference type="ChEBI" id="CHEBI:18420"/>
    </cofactor>
    <text evidence="1">Magnesium is required for nucleotidyltransferase activity.</text>
</comment>
<comment type="cofactor">
    <cofactor evidence="1">
        <name>Ni(2+)</name>
        <dbReference type="ChEBI" id="CHEBI:49786"/>
    </cofactor>
    <text evidence="1">Nickel for phosphatase activity.</text>
</comment>
<comment type="subunit">
    <text evidence="1">Monomer. Can also form homodimers and oligomers.</text>
</comment>
<comment type="domain">
    <text evidence="1">Comprises two domains: an N-terminal domain containing the nucleotidyltransferase activity and a C-terminal HD domain associated with both phosphodiesterase and phosphatase activities.</text>
</comment>
<comment type="miscellaneous">
    <text evidence="1">A single active site specifically recognizes both ATP and CTP and is responsible for their addition.</text>
</comment>
<comment type="similarity">
    <text evidence="1">Belongs to the tRNA nucleotidyltransferase/poly(A) polymerase family. Bacterial CCA-adding enzyme type 1 subfamily.</text>
</comment>
<dbReference type="EC" id="2.7.7.72" evidence="1"/>
<dbReference type="EC" id="3.1.3.-" evidence="1"/>
<dbReference type="EC" id="3.1.4.-" evidence="1"/>
<dbReference type="EMBL" id="CP000512">
    <property type="protein sequence ID" value="ABM34748.1"/>
    <property type="molecule type" value="Genomic_DNA"/>
</dbReference>
<dbReference type="RefSeq" id="WP_011797222.1">
    <property type="nucleotide sequence ID" value="NC_008752.1"/>
</dbReference>
<dbReference type="SMR" id="A1TUW0"/>
<dbReference type="STRING" id="397945.Aave_4208"/>
<dbReference type="KEGG" id="aav:Aave_4208"/>
<dbReference type="eggNOG" id="COG0617">
    <property type="taxonomic scope" value="Bacteria"/>
</dbReference>
<dbReference type="HOGENOM" id="CLU_015961_1_1_4"/>
<dbReference type="OrthoDB" id="9805698at2"/>
<dbReference type="Proteomes" id="UP000002596">
    <property type="component" value="Chromosome"/>
</dbReference>
<dbReference type="GO" id="GO:0005524">
    <property type="term" value="F:ATP binding"/>
    <property type="evidence" value="ECO:0007669"/>
    <property type="project" value="UniProtKB-UniRule"/>
</dbReference>
<dbReference type="GO" id="GO:0004810">
    <property type="term" value="F:CCA tRNA nucleotidyltransferase activity"/>
    <property type="evidence" value="ECO:0007669"/>
    <property type="project" value="UniProtKB-UniRule"/>
</dbReference>
<dbReference type="GO" id="GO:0004112">
    <property type="term" value="F:cyclic-nucleotide phosphodiesterase activity"/>
    <property type="evidence" value="ECO:0007669"/>
    <property type="project" value="UniProtKB-UniRule"/>
</dbReference>
<dbReference type="GO" id="GO:0000287">
    <property type="term" value="F:magnesium ion binding"/>
    <property type="evidence" value="ECO:0007669"/>
    <property type="project" value="UniProtKB-UniRule"/>
</dbReference>
<dbReference type="GO" id="GO:0016791">
    <property type="term" value="F:phosphatase activity"/>
    <property type="evidence" value="ECO:0007669"/>
    <property type="project" value="UniProtKB-UniRule"/>
</dbReference>
<dbReference type="GO" id="GO:0000049">
    <property type="term" value="F:tRNA binding"/>
    <property type="evidence" value="ECO:0007669"/>
    <property type="project" value="UniProtKB-UniRule"/>
</dbReference>
<dbReference type="GO" id="GO:0042245">
    <property type="term" value="P:RNA repair"/>
    <property type="evidence" value="ECO:0007669"/>
    <property type="project" value="UniProtKB-KW"/>
</dbReference>
<dbReference type="GO" id="GO:0001680">
    <property type="term" value="P:tRNA 3'-terminal CCA addition"/>
    <property type="evidence" value="ECO:0007669"/>
    <property type="project" value="UniProtKB-UniRule"/>
</dbReference>
<dbReference type="CDD" id="cd00077">
    <property type="entry name" value="HDc"/>
    <property type="match status" value="1"/>
</dbReference>
<dbReference type="CDD" id="cd05398">
    <property type="entry name" value="NT_ClassII-CCAase"/>
    <property type="match status" value="1"/>
</dbReference>
<dbReference type="Gene3D" id="3.30.460.10">
    <property type="entry name" value="Beta Polymerase, domain 2"/>
    <property type="match status" value="1"/>
</dbReference>
<dbReference type="Gene3D" id="1.10.3090.10">
    <property type="entry name" value="cca-adding enzyme, domain 2"/>
    <property type="match status" value="1"/>
</dbReference>
<dbReference type="HAMAP" id="MF_01261">
    <property type="entry name" value="CCA_bact_type1"/>
    <property type="match status" value="1"/>
</dbReference>
<dbReference type="InterPro" id="IPR012006">
    <property type="entry name" value="CCA_bact"/>
</dbReference>
<dbReference type="InterPro" id="IPR003607">
    <property type="entry name" value="HD/PDEase_dom"/>
</dbReference>
<dbReference type="InterPro" id="IPR006674">
    <property type="entry name" value="HD_domain"/>
</dbReference>
<dbReference type="InterPro" id="IPR043519">
    <property type="entry name" value="NT_sf"/>
</dbReference>
<dbReference type="InterPro" id="IPR002646">
    <property type="entry name" value="PolA_pol_head_dom"/>
</dbReference>
<dbReference type="InterPro" id="IPR032828">
    <property type="entry name" value="PolyA_RNA-bd"/>
</dbReference>
<dbReference type="InterPro" id="IPR050124">
    <property type="entry name" value="tRNA_CCA-adding_enzyme"/>
</dbReference>
<dbReference type="NCBIfam" id="NF008137">
    <property type="entry name" value="PRK10885.1"/>
    <property type="match status" value="1"/>
</dbReference>
<dbReference type="PANTHER" id="PTHR47545">
    <property type="entry name" value="MULTIFUNCTIONAL CCA PROTEIN"/>
    <property type="match status" value="1"/>
</dbReference>
<dbReference type="PANTHER" id="PTHR47545:SF1">
    <property type="entry name" value="MULTIFUNCTIONAL CCA PROTEIN"/>
    <property type="match status" value="1"/>
</dbReference>
<dbReference type="Pfam" id="PF01966">
    <property type="entry name" value="HD"/>
    <property type="match status" value="1"/>
</dbReference>
<dbReference type="Pfam" id="PF01743">
    <property type="entry name" value="PolyA_pol"/>
    <property type="match status" value="1"/>
</dbReference>
<dbReference type="Pfam" id="PF12627">
    <property type="entry name" value="PolyA_pol_RNAbd"/>
    <property type="match status" value="1"/>
</dbReference>
<dbReference type="PIRSF" id="PIRSF000813">
    <property type="entry name" value="CCA_bact"/>
    <property type="match status" value="1"/>
</dbReference>
<dbReference type="SUPFAM" id="SSF81301">
    <property type="entry name" value="Nucleotidyltransferase"/>
    <property type="match status" value="1"/>
</dbReference>
<dbReference type="SUPFAM" id="SSF81891">
    <property type="entry name" value="Poly A polymerase C-terminal region-like"/>
    <property type="match status" value="1"/>
</dbReference>
<dbReference type="PROSITE" id="PS51831">
    <property type="entry name" value="HD"/>
    <property type="match status" value="1"/>
</dbReference>
<accession>A1TUW0</accession>
<reference key="1">
    <citation type="submission" date="2006-12" db="EMBL/GenBank/DDBJ databases">
        <title>Complete sequence of Acidovorax avenae subsp. citrulli AAC00-1.</title>
        <authorList>
            <person name="Copeland A."/>
            <person name="Lucas S."/>
            <person name="Lapidus A."/>
            <person name="Barry K."/>
            <person name="Detter J.C."/>
            <person name="Glavina del Rio T."/>
            <person name="Dalin E."/>
            <person name="Tice H."/>
            <person name="Pitluck S."/>
            <person name="Kiss H."/>
            <person name="Brettin T."/>
            <person name="Bruce D."/>
            <person name="Han C."/>
            <person name="Tapia R."/>
            <person name="Gilna P."/>
            <person name="Schmutz J."/>
            <person name="Larimer F."/>
            <person name="Land M."/>
            <person name="Hauser L."/>
            <person name="Kyrpides N."/>
            <person name="Kim E."/>
            <person name="Stahl D."/>
            <person name="Richardson P."/>
        </authorList>
    </citation>
    <scope>NUCLEOTIDE SEQUENCE [LARGE SCALE GENOMIC DNA]</scope>
    <source>
        <strain>AAC00-1</strain>
    </source>
</reference>